<name>XGPT_YERPA</name>
<feature type="chain" id="PRO_0000261023" description="Xanthine-guanine phosphoribosyltransferase">
    <location>
        <begin position="1"/>
        <end position="152"/>
    </location>
</feature>
<feature type="binding site" evidence="1">
    <location>
        <begin position="37"/>
        <end position="38"/>
    </location>
    <ligand>
        <name>5-phospho-alpha-D-ribose 1-diphosphate</name>
        <dbReference type="ChEBI" id="CHEBI:58017"/>
    </ligand>
</feature>
<feature type="binding site" evidence="1">
    <location>
        <position position="69"/>
    </location>
    <ligand>
        <name>5-phospho-alpha-D-ribose 1-diphosphate</name>
        <dbReference type="ChEBI" id="CHEBI:58017"/>
    </ligand>
</feature>
<feature type="binding site" evidence="1">
    <location>
        <position position="69"/>
    </location>
    <ligand>
        <name>GMP</name>
        <dbReference type="ChEBI" id="CHEBI:58115"/>
    </ligand>
</feature>
<feature type="binding site" evidence="1">
    <location>
        <begin position="88"/>
        <end position="96"/>
    </location>
    <ligand>
        <name>5-phospho-alpha-D-ribose 1-diphosphate</name>
        <dbReference type="ChEBI" id="CHEBI:58017"/>
    </ligand>
</feature>
<feature type="binding site" evidence="1">
    <location>
        <position position="89"/>
    </location>
    <ligand>
        <name>Mg(2+)</name>
        <dbReference type="ChEBI" id="CHEBI:18420"/>
    </ligand>
</feature>
<feature type="binding site" evidence="1">
    <location>
        <begin position="92"/>
        <end position="96"/>
    </location>
    <ligand>
        <name>GMP</name>
        <dbReference type="ChEBI" id="CHEBI:58115"/>
    </ligand>
</feature>
<feature type="binding site" evidence="1">
    <location>
        <position position="92"/>
    </location>
    <ligand>
        <name>guanine</name>
        <dbReference type="ChEBI" id="CHEBI:16235"/>
    </ligand>
</feature>
<feature type="binding site" evidence="1">
    <location>
        <position position="92"/>
    </location>
    <ligand>
        <name>xanthine</name>
        <dbReference type="ChEBI" id="CHEBI:17712"/>
    </ligand>
</feature>
<feature type="binding site" evidence="1">
    <location>
        <begin position="134"/>
        <end position="135"/>
    </location>
    <ligand>
        <name>GMP</name>
        <dbReference type="ChEBI" id="CHEBI:58115"/>
    </ligand>
</feature>
<feature type="binding site" evidence="1">
    <location>
        <position position="135"/>
    </location>
    <ligand>
        <name>guanine</name>
        <dbReference type="ChEBI" id="CHEBI:16235"/>
    </ligand>
</feature>
<feature type="binding site" evidence="1">
    <location>
        <position position="135"/>
    </location>
    <ligand>
        <name>xanthine</name>
        <dbReference type="ChEBI" id="CHEBI:17712"/>
    </ligand>
</feature>
<sequence>MNEKYVVTWDMLQIHARKLAQRLLPAEQWKGIIAVSRGGLVPAGILARELGIRYVDTVCISSYDHDNQRDLKVLKRAEGDGEGFIVIDDLVDTGGTATAIREMYPKAHFVTIFAKPAGRPLVDDYVVDIPQNTWIEQPWDMAVTFVAPLSGK</sequence>
<protein>
    <recommendedName>
        <fullName evidence="1">Xanthine-guanine phosphoribosyltransferase</fullName>
        <shortName evidence="1">XGPRT</shortName>
        <ecNumber evidence="1">2.4.2.-</ecNumber>
        <ecNumber evidence="1">2.4.2.22</ecNumber>
    </recommendedName>
    <alternativeName>
        <fullName evidence="1">Xanthine phosphoribosyltransferase</fullName>
    </alternativeName>
</protein>
<organism>
    <name type="scientific">Yersinia pestis bv. Antiqua (strain Antiqua)</name>
    <dbReference type="NCBI Taxonomy" id="360102"/>
    <lineage>
        <taxon>Bacteria</taxon>
        <taxon>Pseudomonadati</taxon>
        <taxon>Pseudomonadota</taxon>
        <taxon>Gammaproteobacteria</taxon>
        <taxon>Enterobacterales</taxon>
        <taxon>Yersiniaceae</taxon>
        <taxon>Yersinia</taxon>
    </lineage>
</organism>
<keyword id="KW-0997">Cell inner membrane</keyword>
<keyword id="KW-1003">Cell membrane</keyword>
<keyword id="KW-0328">Glycosyltransferase</keyword>
<keyword id="KW-0460">Magnesium</keyword>
<keyword id="KW-0472">Membrane</keyword>
<keyword id="KW-0479">Metal-binding</keyword>
<keyword id="KW-0660">Purine salvage</keyword>
<keyword id="KW-0808">Transferase</keyword>
<gene>
    <name evidence="1" type="primary">gpt</name>
    <name type="ordered locus">YPA_2717</name>
</gene>
<proteinExistence type="inferred from homology"/>
<accession>Q1C4E3</accession>
<evidence type="ECO:0000255" key="1">
    <source>
        <dbReference type="HAMAP-Rule" id="MF_01903"/>
    </source>
</evidence>
<comment type="function">
    <text evidence="1">Purine salvage pathway enzyme that catalyzes the transfer of the ribosyl-5-phosphate group from 5-phospho-alpha-D-ribose 1-diphosphate (PRPP) to the N9 position of the 6-oxopurines guanine and xanthine to form the corresponding ribonucleotides GMP (guanosine 5'-monophosphate) and XMP (xanthosine 5'-monophosphate), with the release of PPi. To a lesser extent, also acts on hypoxanthine.</text>
</comment>
<comment type="catalytic activity">
    <reaction evidence="1">
        <text>GMP + diphosphate = guanine + 5-phospho-alpha-D-ribose 1-diphosphate</text>
        <dbReference type="Rhea" id="RHEA:25424"/>
        <dbReference type="ChEBI" id="CHEBI:16235"/>
        <dbReference type="ChEBI" id="CHEBI:33019"/>
        <dbReference type="ChEBI" id="CHEBI:58017"/>
        <dbReference type="ChEBI" id="CHEBI:58115"/>
    </reaction>
    <physiologicalReaction direction="right-to-left" evidence="1">
        <dbReference type="Rhea" id="RHEA:25426"/>
    </physiologicalReaction>
</comment>
<comment type="catalytic activity">
    <reaction evidence="1">
        <text>XMP + diphosphate = xanthine + 5-phospho-alpha-D-ribose 1-diphosphate</text>
        <dbReference type="Rhea" id="RHEA:10800"/>
        <dbReference type="ChEBI" id="CHEBI:17712"/>
        <dbReference type="ChEBI" id="CHEBI:33019"/>
        <dbReference type="ChEBI" id="CHEBI:57464"/>
        <dbReference type="ChEBI" id="CHEBI:58017"/>
        <dbReference type="EC" id="2.4.2.22"/>
    </reaction>
    <physiologicalReaction direction="right-to-left" evidence="1">
        <dbReference type="Rhea" id="RHEA:10802"/>
    </physiologicalReaction>
</comment>
<comment type="catalytic activity">
    <reaction evidence="1">
        <text>IMP + diphosphate = hypoxanthine + 5-phospho-alpha-D-ribose 1-diphosphate</text>
        <dbReference type="Rhea" id="RHEA:17973"/>
        <dbReference type="ChEBI" id="CHEBI:17368"/>
        <dbReference type="ChEBI" id="CHEBI:33019"/>
        <dbReference type="ChEBI" id="CHEBI:58017"/>
        <dbReference type="ChEBI" id="CHEBI:58053"/>
    </reaction>
    <physiologicalReaction direction="right-to-left" evidence="1">
        <dbReference type="Rhea" id="RHEA:17975"/>
    </physiologicalReaction>
</comment>
<comment type="cofactor">
    <cofactor evidence="1">
        <name>Mg(2+)</name>
        <dbReference type="ChEBI" id="CHEBI:18420"/>
    </cofactor>
</comment>
<comment type="pathway">
    <text evidence="1">Purine metabolism; GMP biosynthesis via salvage pathway; GMP from guanine: step 1/1.</text>
</comment>
<comment type="pathway">
    <text evidence="1">Purine metabolism; XMP biosynthesis via salvage pathway; XMP from xanthine: step 1/1.</text>
</comment>
<comment type="subunit">
    <text evidence="1">Homotetramer.</text>
</comment>
<comment type="subcellular location">
    <subcellularLocation>
        <location evidence="1">Cell inner membrane</location>
        <topology evidence="1">Peripheral membrane protein</topology>
    </subcellularLocation>
</comment>
<comment type="similarity">
    <text evidence="1">Belongs to the purine/pyrimidine phosphoribosyltransferase family. XGPT subfamily.</text>
</comment>
<dbReference type="EC" id="2.4.2.-" evidence="1"/>
<dbReference type="EC" id="2.4.2.22" evidence="1"/>
<dbReference type="EMBL" id="CP000308">
    <property type="protein sequence ID" value="ABG14679.1"/>
    <property type="molecule type" value="Genomic_DNA"/>
</dbReference>
<dbReference type="RefSeq" id="WP_002208704.1">
    <property type="nucleotide sequence ID" value="NZ_CP009906.1"/>
</dbReference>
<dbReference type="SMR" id="Q1C4E3"/>
<dbReference type="GeneID" id="57975493"/>
<dbReference type="KEGG" id="ypa:YPA_2717"/>
<dbReference type="UniPathway" id="UPA00602">
    <property type="reaction ID" value="UER00658"/>
</dbReference>
<dbReference type="UniPathway" id="UPA00909">
    <property type="reaction ID" value="UER00887"/>
</dbReference>
<dbReference type="Proteomes" id="UP000001971">
    <property type="component" value="Chromosome"/>
</dbReference>
<dbReference type="GO" id="GO:0005829">
    <property type="term" value="C:cytosol"/>
    <property type="evidence" value="ECO:0007669"/>
    <property type="project" value="TreeGrafter"/>
</dbReference>
<dbReference type="GO" id="GO:0005886">
    <property type="term" value="C:plasma membrane"/>
    <property type="evidence" value="ECO:0007669"/>
    <property type="project" value="UniProtKB-SubCell"/>
</dbReference>
<dbReference type="GO" id="GO:0052657">
    <property type="term" value="F:guanine phosphoribosyltransferase activity"/>
    <property type="evidence" value="ECO:0007669"/>
    <property type="project" value="RHEA"/>
</dbReference>
<dbReference type="GO" id="GO:0004422">
    <property type="term" value="F:hypoxanthine phosphoribosyltransferase activity"/>
    <property type="evidence" value="ECO:0007669"/>
    <property type="project" value="TreeGrafter"/>
</dbReference>
<dbReference type="GO" id="GO:0000287">
    <property type="term" value="F:magnesium ion binding"/>
    <property type="evidence" value="ECO:0007669"/>
    <property type="project" value="UniProtKB-UniRule"/>
</dbReference>
<dbReference type="GO" id="GO:0000310">
    <property type="term" value="F:xanthine phosphoribosyltransferase activity"/>
    <property type="evidence" value="ECO:0007669"/>
    <property type="project" value="UniProtKB-UniRule"/>
</dbReference>
<dbReference type="GO" id="GO:0032263">
    <property type="term" value="P:GMP salvage"/>
    <property type="evidence" value="ECO:0007669"/>
    <property type="project" value="UniProtKB-UniRule"/>
</dbReference>
<dbReference type="GO" id="GO:0032264">
    <property type="term" value="P:IMP salvage"/>
    <property type="evidence" value="ECO:0007669"/>
    <property type="project" value="TreeGrafter"/>
</dbReference>
<dbReference type="GO" id="GO:0006166">
    <property type="term" value="P:purine ribonucleoside salvage"/>
    <property type="evidence" value="ECO:0007669"/>
    <property type="project" value="UniProtKB-KW"/>
</dbReference>
<dbReference type="GO" id="GO:0032265">
    <property type="term" value="P:XMP salvage"/>
    <property type="evidence" value="ECO:0007669"/>
    <property type="project" value="UniProtKB-UniRule"/>
</dbReference>
<dbReference type="CDD" id="cd06223">
    <property type="entry name" value="PRTases_typeI"/>
    <property type="match status" value="1"/>
</dbReference>
<dbReference type="FunFam" id="3.40.50.2020:FF:000009">
    <property type="entry name" value="Xanthine phosphoribosyltransferase"/>
    <property type="match status" value="1"/>
</dbReference>
<dbReference type="Gene3D" id="3.40.50.2020">
    <property type="match status" value="1"/>
</dbReference>
<dbReference type="HAMAP" id="MF_01903">
    <property type="entry name" value="XGPRT"/>
    <property type="match status" value="1"/>
</dbReference>
<dbReference type="InterPro" id="IPR000836">
    <property type="entry name" value="PRibTrfase_dom"/>
</dbReference>
<dbReference type="InterPro" id="IPR029057">
    <property type="entry name" value="PRTase-like"/>
</dbReference>
<dbReference type="InterPro" id="IPR023747">
    <property type="entry name" value="Xanthine_Guanine_PRibTrfase"/>
</dbReference>
<dbReference type="NCBIfam" id="NF006613">
    <property type="entry name" value="PRK09177.1"/>
    <property type="match status" value="1"/>
</dbReference>
<dbReference type="PANTHER" id="PTHR39563">
    <property type="entry name" value="XANTHINE PHOSPHORIBOSYLTRANSFERASE"/>
    <property type="match status" value="1"/>
</dbReference>
<dbReference type="PANTHER" id="PTHR39563:SF1">
    <property type="entry name" value="XANTHINE-GUANINE PHOSPHORIBOSYLTRANSFERASE"/>
    <property type="match status" value="1"/>
</dbReference>
<dbReference type="Pfam" id="PF00156">
    <property type="entry name" value="Pribosyltran"/>
    <property type="match status" value="1"/>
</dbReference>
<dbReference type="SUPFAM" id="SSF53271">
    <property type="entry name" value="PRTase-like"/>
    <property type="match status" value="1"/>
</dbReference>
<dbReference type="PROSITE" id="PS00103">
    <property type="entry name" value="PUR_PYR_PR_TRANSFER"/>
    <property type="match status" value="1"/>
</dbReference>
<reference key="1">
    <citation type="journal article" date="2006" name="J. Bacteriol.">
        <title>Complete genome sequence of Yersinia pestis strains Antiqua and Nepal516: evidence of gene reduction in an emerging pathogen.</title>
        <authorList>
            <person name="Chain P.S.G."/>
            <person name="Hu P."/>
            <person name="Malfatti S.A."/>
            <person name="Radnedge L."/>
            <person name="Larimer F."/>
            <person name="Vergez L.M."/>
            <person name="Worsham P."/>
            <person name="Chu M.C."/>
            <person name="Andersen G.L."/>
        </authorList>
    </citation>
    <scope>NUCLEOTIDE SEQUENCE [LARGE SCALE GENOMIC DNA]</scope>
    <source>
        <strain>Antiqua</strain>
    </source>
</reference>